<proteinExistence type="predicted"/>
<accession>P44002</accession>
<reference key="1">
    <citation type="journal article" date="1995" name="Science">
        <title>Whole-genome random sequencing and assembly of Haemophilus influenzae Rd.</title>
        <authorList>
            <person name="Fleischmann R.D."/>
            <person name="Adams M.D."/>
            <person name="White O."/>
            <person name="Clayton R.A."/>
            <person name="Kirkness E.F."/>
            <person name="Kerlavage A.R."/>
            <person name="Bult C.J."/>
            <person name="Tomb J.-F."/>
            <person name="Dougherty B.A."/>
            <person name="Merrick J.M."/>
            <person name="McKenney K."/>
            <person name="Sutton G.G."/>
            <person name="FitzHugh W."/>
            <person name="Fields C.A."/>
            <person name="Gocayne J.D."/>
            <person name="Scott J.D."/>
            <person name="Shirley R."/>
            <person name="Liu L.-I."/>
            <person name="Glodek A."/>
            <person name="Kelley J.M."/>
            <person name="Weidman J.F."/>
            <person name="Phillips C.A."/>
            <person name="Spriggs T."/>
            <person name="Hedblom E."/>
            <person name="Cotton M.D."/>
            <person name="Utterback T.R."/>
            <person name="Hanna M.C."/>
            <person name="Nguyen D.T."/>
            <person name="Saudek D.M."/>
            <person name="Brandon R.C."/>
            <person name="Fine L.D."/>
            <person name="Fritchman J.L."/>
            <person name="Fuhrmann J.L."/>
            <person name="Geoghagen N.S.M."/>
            <person name="Gnehm C.L."/>
            <person name="McDonald L.A."/>
            <person name="Small K.V."/>
            <person name="Fraser C.M."/>
            <person name="Smith H.O."/>
            <person name="Venter J.C."/>
        </authorList>
    </citation>
    <scope>NUCLEOTIDE SEQUENCE [LARGE SCALE GENOMIC DNA]</scope>
    <source>
        <strain>ATCC 51907 / DSM 11121 / KW20 / Rd</strain>
    </source>
</reference>
<organism>
    <name type="scientific">Haemophilus influenzae (strain ATCC 51907 / DSM 11121 / KW20 / Rd)</name>
    <dbReference type="NCBI Taxonomy" id="71421"/>
    <lineage>
        <taxon>Bacteria</taxon>
        <taxon>Pseudomonadati</taxon>
        <taxon>Pseudomonadota</taxon>
        <taxon>Gammaproteobacteria</taxon>
        <taxon>Pasteurellales</taxon>
        <taxon>Pasteurellaceae</taxon>
        <taxon>Haemophilus</taxon>
    </lineage>
</organism>
<gene>
    <name type="ordered locus">HI_0476</name>
</gene>
<dbReference type="EMBL" id="L42023">
    <property type="protein sequence ID" value="AAC22144.1"/>
    <property type="molecule type" value="Genomic_DNA"/>
</dbReference>
<dbReference type="PIR" id="B64008">
    <property type="entry name" value="B64008"/>
</dbReference>
<dbReference type="STRING" id="71421.HI_0476"/>
<dbReference type="EnsemblBacteria" id="AAC22144">
    <property type="protein sequence ID" value="AAC22144"/>
    <property type="gene ID" value="HI_0476"/>
</dbReference>
<dbReference type="KEGG" id="hin:HI_0476"/>
<dbReference type="HOGENOM" id="CLU_3118397_0_0_6"/>
<dbReference type="Proteomes" id="UP000000579">
    <property type="component" value="Chromosome"/>
</dbReference>
<keyword id="KW-1185">Reference proteome</keyword>
<protein>
    <recommendedName>
        <fullName>Uncharacterized protein HI_0476</fullName>
    </recommendedName>
</protein>
<feature type="chain" id="PRO_0000077927" description="Uncharacterized protein HI_0476">
    <location>
        <begin position="1"/>
        <end position="50"/>
    </location>
</feature>
<sequence length="50" mass="6005">MVIKCIDKQQNLGNIILFLLLKQQYSKEDSKKFTIYKFYLQTVNYTIQLS</sequence>
<name>Y476_HAEIN</name>